<proteinExistence type="inferred from homology"/>
<keyword id="KW-0067">ATP-binding</keyword>
<keyword id="KW-1003">Cell membrane</keyword>
<keyword id="KW-0418">Kinase</keyword>
<keyword id="KW-0472">Membrane</keyword>
<keyword id="KW-0547">Nucleotide-binding</keyword>
<keyword id="KW-0597">Phosphoprotein</keyword>
<keyword id="KW-0808">Transferase</keyword>
<keyword id="KW-0812">Transmembrane</keyword>
<keyword id="KW-1133">Transmembrane helix</keyword>
<keyword id="KW-0902">Two-component regulatory system</keyword>
<keyword id="KW-0843">Virulence</keyword>
<organism>
    <name type="scientific">Staphylococcus aureus (strain Mu50 / ATCC 700699)</name>
    <dbReference type="NCBI Taxonomy" id="158878"/>
    <lineage>
        <taxon>Bacteria</taxon>
        <taxon>Bacillati</taxon>
        <taxon>Bacillota</taxon>
        <taxon>Bacilli</taxon>
        <taxon>Bacillales</taxon>
        <taxon>Staphylococcaceae</taxon>
        <taxon>Staphylococcus</taxon>
    </lineage>
</organism>
<name>ARLS_STAAM</name>
<dbReference type="EC" id="2.7.13.3"/>
<dbReference type="EMBL" id="BA000017">
    <property type="protein sequence ID" value="BAB57576.1"/>
    <property type="molecule type" value="Genomic_DNA"/>
</dbReference>
<dbReference type="RefSeq" id="WP_000166801.1">
    <property type="nucleotide sequence ID" value="NC_002758.2"/>
</dbReference>
<dbReference type="SMR" id="Q7A2R7"/>
<dbReference type="KEGG" id="sav:SAV1414"/>
<dbReference type="HOGENOM" id="CLU_000445_89_6_9"/>
<dbReference type="PhylomeDB" id="Q7A2R7"/>
<dbReference type="Proteomes" id="UP000002481">
    <property type="component" value="Chromosome"/>
</dbReference>
<dbReference type="GO" id="GO:0005886">
    <property type="term" value="C:plasma membrane"/>
    <property type="evidence" value="ECO:0007669"/>
    <property type="project" value="UniProtKB-SubCell"/>
</dbReference>
<dbReference type="GO" id="GO:0005524">
    <property type="term" value="F:ATP binding"/>
    <property type="evidence" value="ECO:0007669"/>
    <property type="project" value="UniProtKB-KW"/>
</dbReference>
<dbReference type="GO" id="GO:0000155">
    <property type="term" value="F:phosphorelay sensor kinase activity"/>
    <property type="evidence" value="ECO:0007669"/>
    <property type="project" value="InterPro"/>
</dbReference>
<dbReference type="CDD" id="cd00075">
    <property type="entry name" value="HATPase"/>
    <property type="match status" value="1"/>
</dbReference>
<dbReference type="CDD" id="cd00082">
    <property type="entry name" value="HisKA"/>
    <property type="match status" value="1"/>
</dbReference>
<dbReference type="FunFam" id="3.30.565.10:FF:000006">
    <property type="entry name" value="Sensor histidine kinase WalK"/>
    <property type="match status" value="1"/>
</dbReference>
<dbReference type="FunFam" id="1.10.287.130:FF:000001">
    <property type="entry name" value="Two-component sensor histidine kinase"/>
    <property type="match status" value="1"/>
</dbReference>
<dbReference type="Gene3D" id="1.10.287.130">
    <property type="match status" value="1"/>
</dbReference>
<dbReference type="Gene3D" id="6.10.340.10">
    <property type="match status" value="1"/>
</dbReference>
<dbReference type="Gene3D" id="3.30.565.10">
    <property type="entry name" value="Histidine kinase-like ATPase, C-terminal domain"/>
    <property type="match status" value="1"/>
</dbReference>
<dbReference type="InterPro" id="IPR041610">
    <property type="entry name" value="ArlS_N"/>
</dbReference>
<dbReference type="InterPro" id="IPR050398">
    <property type="entry name" value="Bact_Sensor_His_Kinase"/>
</dbReference>
<dbReference type="InterPro" id="IPR003660">
    <property type="entry name" value="HAMP_dom"/>
</dbReference>
<dbReference type="InterPro" id="IPR036890">
    <property type="entry name" value="HATPase_C_sf"/>
</dbReference>
<dbReference type="InterPro" id="IPR005467">
    <property type="entry name" value="His_kinase_dom"/>
</dbReference>
<dbReference type="InterPro" id="IPR003661">
    <property type="entry name" value="HisK_dim/P_dom"/>
</dbReference>
<dbReference type="InterPro" id="IPR036097">
    <property type="entry name" value="HisK_dim/P_sf"/>
</dbReference>
<dbReference type="InterPro" id="IPR004358">
    <property type="entry name" value="Sig_transdc_His_kin-like_C"/>
</dbReference>
<dbReference type="PANTHER" id="PTHR45528:SF12">
    <property type="entry name" value="SENSOR HISTIDINE KINASE ARSS"/>
    <property type="match status" value="1"/>
</dbReference>
<dbReference type="PANTHER" id="PTHR45528">
    <property type="entry name" value="SENSOR HISTIDINE KINASE CPXA"/>
    <property type="match status" value="1"/>
</dbReference>
<dbReference type="Pfam" id="PF18719">
    <property type="entry name" value="ArlS_N"/>
    <property type="match status" value="1"/>
</dbReference>
<dbReference type="Pfam" id="PF02518">
    <property type="entry name" value="HATPase_c"/>
    <property type="match status" value="1"/>
</dbReference>
<dbReference type="Pfam" id="PF00512">
    <property type="entry name" value="HisKA"/>
    <property type="match status" value="1"/>
</dbReference>
<dbReference type="PRINTS" id="PR00344">
    <property type="entry name" value="BCTRLSENSOR"/>
</dbReference>
<dbReference type="SMART" id="SM00387">
    <property type="entry name" value="HATPase_c"/>
    <property type="match status" value="1"/>
</dbReference>
<dbReference type="SMART" id="SM00388">
    <property type="entry name" value="HisKA"/>
    <property type="match status" value="1"/>
</dbReference>
<dbReference type="SUPFAM" id="SSF55874">
    <property type="entry name" value="ATPase domain of HSP90 chaperone/DNA topoisomerase II/histidine kinase"/>
    <property type="match status" value="1"/>
</dbReference>
<dbReference type="SUPFAM" id="SSF158472">
    <property type="entry name" value="HAMP domain-like"/>
    <property type="match status" value="1"/>
</dbReference>
<dbReference type="SUPFAM" id="SSF47384">
    <property type="entry name" value="Homodimeric domain of signal transducing histidine kinase"/>
    <property type="match status" value="1"/>
</dbReference>
<dbReference type="PROSITE" id="PS50885">
    <property type="entry name" value="HAMP"/>
    <property type="match status" value="1"/>
</dbReference>
<dbReference type="PROSITE" id="PS50109">
    <property type="entry name" value="HIS_KIN"/>
    <property type="match status" value="1"/>
</dbReference>
<comment type="function">
    <text evidence="1">Member of the two-component regulatory system ArlS/ArlR involved in the regulation of adhesion, autolysis, multidrug resistance and virulence. ArlS probably functions as a sensor protein kinase which is autophosphorylated at a histidine residue and transfers its phosphate group to ArlR (By similarity).</text>
</comment>
<comment type="catalytic activity">
    <reaction>
        <text>ATP + protein L-histidine = ADP + protein N-phospho-L-histidine.</text>
        <dbReference type="EC" id="2.7.13.3"/>
    </reaction>
</comment>
<comment type="subcellular location">
    <subcellularLocation>
        <location evidence="1">Cell membrane</location>
        <topology evidence="1">Multi-pass membrane protein</topology>
    </subcellularLocation>
</comment>
<comment type="PTM">
    <text evidence="1">Autophosphorylated.</text>
</comment>
<accession>Q7A2R7</accession>
<evidence type="ECO:0000250" key="1"/>
<evidence type="ECO:0000255" key="2"/>
<evidence type="ECO:0000255" key="3">
    <source>
        <dbReference type="PROSITE-ProRule" id="PRU00102"/>
    </source>
</evidence>
<evidence type="ECO:0000255" key="4">
    <source>
        <dbReference type="PROSITE-ProRule" id="PRU00107"/>
    </source>
</evidence>
<gene>
    <name type="primary">arlS</name>
    <name type="ordered locus">SAV1414</name>
</gene>
<reference key="1">
    <citation type="journal article" date="2001" name="Lancet">
        <title>Whole genome sequencing of meticillin-resistant Staphylococcus aureus.</title>
        <authorList>
            <person name="Kuroda M."/>
            <person name="Ohta T."/>
            <person name="Uchiyama I."/>
            <person name="Baba T."/>
            <person name="Yuzawa H."/>
            <person name="Kobayashi I."/>
            <person name="Cui L."/>
            <person name="Oguchi A."/>
            <person name="Aoki K."/>
            <person name="Nagai Y."/>
            <person name="Lian J.-Q."/>
            <person name="Ito T."/>
            <person name="Kanamori M."/>
            <person name="Matsumaru H."/>
            <person name="Maruyama A."/>
            <person name="Murakami H."/>
            <person name="Hosoyama A."/>
            <person name="Mizutani-Ui Y."/>
            <person name="Takahashi N.K."/>
            <person name="Sawano T."/>
            <person name="Inoue R."/>
            <person name="Kaito C."/>
            <person name="Sekimizu K."/>
            <person name="Hirakawa H."/>
            <person name="Kuhara S."/>
            <person name="Goto S."/>
            <person name="Yabuzaki J."/>
            <person name="Kanehisa M."/>
            <person name="Yamashita A."/>
            <person name="Oshima K."/>
            <person name="Furuya K."/>
            <person name="Yoshino C."/>
            <person name="Shiba T."/>
            <person name="Hattori M."/>
            <person name="Ogasawara N."/>
            <person name="Hayashi H."/>
            <person name="Hiramatsu K."/>
        </authorList>
    </citation>
    <scope>NUCLEOTIDE SEQUENCE [LARGE SCALE GENOMIC DNA]</scope>
    <source>
        <strain>Mu50 / ATCC 700699</strain>
    </source>
</reference>
<feature type="chain" id="PRO_0000074690" description="Signal transduction histidine-protein kinase ArlS">
    <location>
        <begin position="1"/>
        <end position="451"/>
    </location>
</feature>
<feature type="transmembrane region" description="Helical" evidence="2">
    <location>
        <begin position="11"/>
        <end position="31"/>
    </location>
</feature>
<feature type="transmembrane region" description="Helical" evidence="2">
    <location>
        <begin position="156"/>
        <end position="176"/>
    </location>
</feature>
<feature type="domain" description="HAMP" evidence="3">
    <location>
        <begin position="178"/>
        <end position="231"/>
    </location>
</feature>
<feature type="domain" description="Histidine kinase" evidence="4">
    <location>
        <begin position="239"/>
        <end position="451"/>
    </location>
</feature>
<feature type="modified residue" description="Phosphohistidine; by autocatalysis" evidence="4">
    <location>
        <position position="242"/>
    </location>
</feature>
<protein>
    <recommendedName>
        <fullName>Signal transduction histidine-protein kinase ArlS</fullName>
        <ecNumber>2.7.13.3</ecNumber>
    </recommendedName>
</protein>
<sequence>MTKRKLRNNWIIVTTMITFVTIFLFCLIIIFFLKDTLHNSELDDAERSSSDINNLFHSKPVKDISALDLNASLGNFQEIIIYDEHNNKLFETSNDNTVRVEPGYEHRYFDRVIKKRYKGIEYLIIKEPITTQDFKGYSLLIHSLENYDNIVKSLYIIALAFGVIATIITATISYVFSTQITKPLVSLSNKMIEIRRDGFQNKLQLNTNYEEIDNLANTFNEMMSQIEESFNQQRQFVEDASHELRTPLQIIQGHLNLIQRWGKKDPAVLEESLNISIEEMNRIIKLVEELLELTKGDVNDISSEAQTVHINDEIRSRIHSLKQLHPDYQFDTDLTSKNLEIKMKPHQFEQLFLIFIDNAIKYDVKNKKIKVKTRLKNKQKIIEITDHGIGIPEEDQDFIFDRFYRVDKSRSRSQGGNGLGLSIAQKIIQLNGGSIKIKSEINKGTTFKIIF</sequence>